<gene>
    <name evidence="1" type="primary">rpiA</name>
    <name type="ordered locus">NE1743</name>
</gene>
<name>RPIA_NITEU</name>
<feature type="chain" id="PRO_0000158440" description="Ribose-5-phosphate isomerase A">
    <location>
        <begin position="1"/>
        <end position="219"/>
    </location>
</feature>
<feature type="active site" description="Proton acceptor" evidence="1">
    <location>
        <position position="103"/>
    </location>
</feature>
<feature type="binding site" evidence="1">
    <location>
        <begin position="28"/>
        <end position="31"/>
    </location>
    <ligand>
        <name>substrate</name>
    </ligand>
</feature>
<feature type="binding site" evidence="1">
    <location>
        <begin position="81"/>
        <end position="84"/>
    </location>
    <ligand>
        <name>substrate</name>
    </ligand>
</feature>
<feature type="binding site" evidence="1">
    <location>
        <begin position="94"/>
        <end position="97"/>
    </location>
    <ligand>
        <name>substrate</name>
    </ligand>
</feature>
<feature type="binding site" evidence="1">
    <location>
        <position position="121"/>
    </location>
    <ligand>
        <name>substrate</name>
    </ligand>
</feature>
<protein>
    <recommendedName>
        <fullName evidence="1">Ribose-5-phosphate isomerase A</fullName>
        <ecNumber evidence="1">5.3.1.6</ecNumber>
    </recommendedName>
    <alternativeName>
        <fullName evidence="1">Phosphoriboisomerase A</fullName>
        <shortName evidence="1">PRI</shortName>
    </alternativeName>
</protein>
<comment type="function">
    <text evidence="1">Catalyzes the reversible conversion of ribose-5-phosphate to ribulose 5-phosphate.</text>
</comment>
<comment type="catalytic activity">
    <reaction evidence="1">
        <text>aldehydo-D-ribose 5-phosphate = D-ribulose 5-phosphate</text>
        <dbReference type="Rhea" id="RHEA:14657"/>
        <dbReference type="ChEBI" id="CHEBI:58121"/>
        <dbReference type="ChEBI" id="CHEBI:58273"/>
        <dbReference type="EC" id="5.3.1.6"/>
    </reaction>
</comment>
<comment type="pathway">
    <text evidence="1">Carbohydrate degradation; pentose phosphate pathway; D-ribose 5-phosphate from D-ribulose 5-phosphate (non-oxidative stage): step 1/1.</text>
</comment>
<comment type="subunit">
    <text evidence="1">Homodimer.</text>
</comment>
<comment type="similarity">
    <text evidence="1">Belongs to the ribose 5-phosphate isomerase family.</text>
</comment>
<evidence type="ECO:0000255" key="1">
    <source>
        <dbReference type="HAMAP-Rule" id="MF_00170"/>
    </source>
</evidence>
<dbReference type="EC" id="5.3.1.6" evidence="1"/>
<dbReference type="EMBL" id="AL954747">
    <property type="protein sequence ID" value="CAD85654.1"/>
    <property type="molecule type" value="Genomic_DNA"/>
</dbReference>
<dbReference type="RefSeq" id="WP_011112295.1">
    <property type="nucleotide sequence ID" value="NC_004757.1"/>
</dbReference>
<dbReference type="SMR" id="Q82TX6"/>
<dbReference type="STRING" id="228410.NE1743"/>
<dbReference type="GeneID" id="87104904"/>
<dbReference type="KEGG" id="neu:NE1743"/>
<dbReference type="eggNOG" id="COG0120">
    <property type="taxonomic scope" value="Bacteria"/>
</dbReference>
<dbReference type="HOGENOM" id="CLU_056590_1_1_4"/>
<dbReference type="OrthoDB" id="5870696at2"/>
<dbReference type="PhylomeDB" id="Q82TX6"/>
<dbReference type="UniPathway" id="UPA00115">
    <property type="reaction ID" value="UER00412"/>
</dbReference>
<dbReference type="Proteomes" id="UP000001416">
    <property type="component" value="Chromosome"/>
</dbReference>
<dbReference type="GO" id="GO:0005829">
    <property type="term" value="C:cytosol"/>
    <property type="evidence" value="ECO:0007669"/>
    <property type="project" value="TreeGrafter"/>
</dbReference>
<dbReference type="GO" id="GO:0004751">
    <property type="term" value="F:ribose-5-phosphate isomerase activity"/>
    <property type="evidence" value="ECO:0007669"/>
    <property type="project" value="UniProtKB-UniRule"/>
</dbReference>
<dbReference type="GO" id="GO:0006014">
    <property type="term" value="P:D-ribose metabolic process"/>
    <property type="evidence" value="ECO:0007669"/>
    <property type="project" value="TreeGrafter"/>
</dbReference>
<dbReference type="GO" id="GO:0009052">
    <property type="term" value="P:pentose-phosphate shunt, non-oxidative branch"/>
    <property type="evidence" value="ECO:0007669"/>
    <property type="project" value="UniProtKB-UniRule"/>
</dbReference>
<dbReference type="CDD" id="cd01398">
    <property type="entry name" value="RPI_A"/>
    <property type="match status" value="1"/>
</dbReference>
<dbReference type="FunFam" id="3.30.70.260:FF:000004">
    <property type="entry name" value="Ribose-5-phosphate isomerase A"/>
    <property type="match status" value="1"/>
</dbReference>
<dbReference type="FunFam" id="3.40.50.1360:FF:000001">
    <property type="entry name" value="Ribose-5-phosphate isomerase A"/>
    <property type="match status" value="1"/>
</dbReference>
<dbReference type="Gene3D" id="3.30.70.260">
    <property type="match status" value="1"/>
</dbReference>
<dbReference type="Gene3D" id="3.40.50.1360">
    <property type="match status" value="1"/>
</dbReference>
<dbReference type="HAMAP" id="MF_00170">
    <property type="entry name" value="Rib_5P_isom_A"/>
    <property type="match status" value="1"/>
</dbReference>
<dbReference type="InterPro" id="IPR037171">
    <property type="entry name" value="NagB/RpiA_transferase-like"/>
</dbReference>
<dbReference type="InterPro" id="IPR020672">
    <property type="entry name" value="Ribose5P_isomerase_typA_subgr"/>
</dbReference>
<dbReference type="InterPro" id="IPR004788">
    <property type="entry name" value="Ribose5P_isomerase_type_A"/>
</dbReference>
<dbReference type="NCBIfam" id="NF001924">
    <property type="entry name" value="PRK00702.1"/>
    <property type="match status" value="1"/>
</dbReference>
<dbReference type="NCBIfam" id="TIGR00021">
    <property type="entry name" value="rpiA"/>
    <property type="match status" value="1"/>
</dbReference>
<dbReference type="PANTHER" id="PTHR11934">
    <property type="entry name" value="RIBOSE-5-PHOSPHATE ISOMERASE"/>
    <property type="match status" value="1"/>
</dbReference>
<dbReference type="PANTHER" id="PTHR11934:SF0">
    <property type="entry name" value="RIBOSE-5-PHOSPHATE ISOMERASE"/>
    <property type="match status" value="1"/>
</dbReference>
<dbReference type="Pfam" id="PF06026">
    <property type="entry name" value="Rib_5-P_isom_A"/>
    <property type="match status" value="1"/>
</dbReference>
<dbReference type="SUPFAM" id="SSF75445">
    <property type="entry name" value="D-ribose-5-phosphate isomerase (RpiA), lid domain"/>
    <property type="match status" value="1"/>
</dbReference>
<dbReference type="SUPFAM" id="SSF100950">
    <property type="entry name" value="NagB/RpiA/CoA transferase-like"/>
    <property type="match status" value="1"/>
</dbReference>
<accession>Q82TX6</accession>
<organism>
    <name type="scientific">Nitrosomonas europaea (strain ATCC 19718 / CIP 103999 / KCTC 2705 / NBRC 14298)</name>
    <dbReference type="NCBI Taxonomy" id="228410"/>
    <lineage>
        <taxon>Bacteria</taxon>
        <taxon>Pseudomonadati</taxon>
        <taxon>Pseudomonadota</taxon>
        <taxon>Betaproteobacteria</taxon>
        <taxon>Nitrosomonadales</taxon>
        <taxon>Nitrosomonadaceae</taxon>
        <taxon>Nitrosomonas</taxon>
    </lineage>
</organism>
<sequence>MTQDEQKRAVAQAALQYVPTGEIIGIGTGSTANLFIDELAKIKHRIEGAVASSEVTANRLKQHGIEVLDLNSVGELPVYIDGADEITRNMHMIKGGGGALTREKIVAAVARKFICIADQSKLVKVLGKFPLPVEVIPMARSYVAREITLLGGQPAWRQGFTTDNGNIILDVHNLNIMNPVELETALNQIAGVVTNGLFARRAANVLLMGTDQGVETITV</sequence>
<keyword id="KW-0413">Isomerase</keyword>
<keyword id="KW-1185">Reference proteome</keyword>
<reference key="1">
    <citation type="journal article" date="2003" name="J. Bacteriol.">
        <title>Complete genome sequence of the ammonia-oxidizing bacterium and obligate chemolithoautotroph Nitrosomonas europaea.</title>
        <authorList>
            <person name="Chain P."/>
            <person name="Lamerdin J.E."/>
            <person name="Larimer F.W."/>
            <person name="Regala W."/>
            <person name="Lao V."/>
            <person name="Land M.L."/>
            <person name="Hauser L."/>
            <person name="Hooper A.B."/>
            <person name="Klotz M.G."/>
            <person name="Norton J."/>
            <person name="Sayavedra-Soto L.A."/>
            <person name="Arciero D.M."/>
            <person name="Hommes N.G."/>
            <person name="Whittaker M.M."/>
            <person name="Arp D.J."/>
        </authorList>
    </citation>
    <scope>NUCLEOTIDE SEQUENCE [LARGE SCALE GENOMIC DNA]</scope>
    <source>
        <strain>ATCC 19718 / CIP 103999 / KCTC 2705 / NBRC 14298</strain>
    </source>
</reference>
<proteinExistence type="inferred from homology"/>